<feature type="chain" id="PRO_0000317983" description="Autophagy-related protein 17">
    <location>
        <begin position="1"/>
        <end position="500"/>
    </location>
</feature>
<feature type="region of interest" description="Disordered" evidence="3">
    <location>
        <begin position="1"/>
        <end position="30"/>
    </location>
</feature>
<feature type="region of interest" description="Disordered" evidence="3">
    <location>
        <begin position="470"/>
        <end position="500"/>
    </location>
</feature>
<feature type="coiled-coil region" evidence="2">
    <location>
        <begin position="157"/>
        <end position="181"/>
    </location>
</feature>
<feature type="coiled-coil region" evidence="2">
    <location>
        <begin position="292"/>
        <end position="322"/>
    </location>
</feature>
<feature type="compositionally biased region" description="Polar residues" evidence="3">
    <location>
        <begin position="1"/>
        <end position="19"/>
    </location>
</feature>
<feature type="compositionally biased region" description="Basic and acidic residues" evidence="3">
    <location>
        <begin position="481"/>
        <end position="490"/>
    </location>
</feature>
<feature type="compositionally biased region" description="Basic residues" evidence="3">
    <location>
        <begin position="491"/>
        <end position="500"/>
    </location>
</feature>
<evidence type="ECO:0000250" key="1"/>
<evidence type="ECO:0000255" key="2"/>
<evidence type="ECO:0000256" key="3">
    <source>
        <dbReference type="SAM" id="MobiDB-lite"/>
    </source>
</evidence>
<evidence type="ECO:0000305" key="4"/>
<protein>
    <recommendedName>
        <fullName>Autophagy-related protein 17</fullName>
    </recommendedName>
</protein>
<keyword id="KW-0072">Autophagy</keyword>
<keyword id="KW-0175">Coiled coil</keyword>
<keyword id="KW-0963">Cytoplasm</keyword>
<keyword id="KW-0472">Membrane</keyword>
<keyword id="KW-1185">Reference proteome</keyword>
<proteinExistence type="inferred from homology"/>
<comment type="function">
    <text evidence="1">Autophagy-specific protein that functions in response to autophagy-inducing signals as a scaffold to recruit other ATG proteins to organize pre-autophagosomal structure (PAS) formation. Modulates the timing and magnitude of the autophagy response, such as the size of the sequestering vesicles. Plays particularly a role in pexophagy and nucleophagy (By similarity).</text>
</comment>
<comment type="subcellular location">
    <subcellularLocation>
        <location evidence="1">Cytoplasm</location>
    </subcellularLocation>
    <subcellularLocation>
        <location evidence="1">Preautophagosomal structure membrane</location>
        <topology evidence="1">Peripheral membrane protein</topology>
    </subcellularLocation>
</comment>
<comment type="similarity">
    <text evidence="4">Belongs to the ATG17 family.</text>
</comment>
<name>ATG17_BOTFB</name>
<sequence length="500" mass="56338">MASSPNAPGSHSHTSISTVNPPPPAHTNQGLEIPLETLVSHLLASKRSLSSISTVWRANEIVTSAKNALEESAILQAKTRFLQSGINEQMKTLLKVRKTVEFVYNDGQEDFSNVLHNLDAADARLESTMNMLRSTMVDAAFRPAGEEPRNLLDFVDEQGVEKMRDGLKELIDESKEAEAAFGTSILSFDSDIRSLKSGFKNSKRKTSSYSPIPNHLYTLEGHAQEMASLLSSLSSHFDLCLNAIRHTEGGYAAVRNAASNPPPGAEPVSVSGVMSNSHDDINEAPLTEHEREEMFSILEKDAAEVEDVVMELHDRQNEMEAKHDAILDHVSHLAEQFRHTASVYKTLEGVYQRLPRYILAGHDFRARWEDTKVHINEQMNELEGMRLFYENYLSSYDGLILEVHRRTVAEEKARSIAKKAMEQINKIYDIDVKERNDFKFDVGDYLPVDLYPGISEAPPKWDFRLVEDEEGGSSTPLLERSVVKESFKRDRERHRNSKDN</sequence>
<accession>A6SG03</accession>
<accession>A0A384JNL0</accession>
<reference key="1">
    <citation type="journal article" date="2011" name="PLoS Genet.">
        <title>Genomic analysis of the necrotrophic fungal pathogens Sclerotinia sclerotiorum and Botrytis cinerea.</title>
        <authorList>
            <person name="Amselem J."/>
            <person name="Cuomo C.A."/>
            <person name="van Kan J.A.L."/>
            <person name="Viaud M."/>
            <person name="Benito E.P."/>
            <person name="Couloux A."/>
            <person name="Coutinho P.M."/>
            <person name="de Vries R.P."/>
            <person name="Dyer P.S."/>
            <person name="Fillinger S."/>
            <person name="Fournier E."/>
            <person name="Gout L."/>
            <person name="Hahn M."/>
            <person name="Kohn L."/>
            <person name="Lapalu N."/>
            <person name="Plummer K.M."/>
            <person name="Pradier J.-M."/>
            <person name="Quevillon E."/>
            <person name="Sharon A."/>
            <person name="Simon A."/>
            <person name="ten Have A."/>
            <person name="Tudzynski B."/>
            <person name="Tudzynski P."/>
            <person name="Wincker P."/>
            <person name="Andrew M."/>
            <person name="Anthouard V."/>
            <person name="Beever R.E."/>
            <person name="Beffa R."/>
            <person name="Benoit I."/>
            <person name="Bouzid O."/>
            <person name="Brault B."/>
            <person name="Chen Z."/>
            <person name="Choquer M."/>
            <person name="Collemare J."/>
            <person name="Cotton P."/>
            <person name="Danchin E.G."/>
            <person name="Da Silva C."/>
            <person name="Gautier A."/>
            <person name="Giraud C."/>
            <person name="Giraud T."/>
            <person name="Gonzalez C."/>
            <person name="Grossetete S."/>
            <person name="Gueldener U."/>
            <person name="Henrissat B."/>
            <person name="Howlett B.J."/>
            <person name="Kodira C."/>
            <person name="Kretschmer M."/>
            <person name="Lappartient A."/>
            <person name="Leroch M."/>
            <person name="Levis C."/>
            <person name="Mauceli E."/>
            <person name="Neuveglise C."/>
            <person name="Oeser B."/>
            <person name="Pearson M."/>
            <person name="Poulain J."/>
            <person name="Poussereau N."/>
            <person name="Quesneville H."/>
            <person name="Rascle C."/>
            <person name="Schumacher J."/>
            <person name="Segurens B."/>
            <person name="Sexton A."/>
            <person name="Silva E."/>
            <person name="Sirven C."/>
            <person name="Soanes D.M."/>
            <person name="Talbot N.J."/>
            <person name="Templeton M."/>
            <person name="Yandava C."/>
            <person name="Yarden O."/>
            <person name="Zeng Q."/>
            <person name="Rollins J.A."/>
            <person name="Lebrun M.-H."/>
            <person name="Dickman M."/>
        </authorList>
    </citation>
    <scope>NUCLEOTIDE SEQUENCE [LARGE SCALE GENOMIC DNA]</scope>
    <source>
        <strain>B05.10</strain>
    </source>
</reference>
<reference key="2">
    <citation type="journal article" date="2012" name="Eukaryot. Cell">
        <title>Genome update of Botrytis cinerea strains B05.10 and T4.</title>
        <authorList>
            <person name="Staats M."/>
            <person name="van Kan J.A.L."/>
        </authorList>
    </citation>
    <scope>NUCLEOTIDE SEQUENCE [LARGE SCALE GENOMIC DNA]</scope>
    <scope>GENOME REANNOTATION</scope>
    <source>
        <strain>B05.10</strain>
    </source>
</reference>
<reference key="3">
    <citation type="journal article" date="2017" name="Mol. Plant Pathol.">
        <title>A gapless genome sequence of the fungus Botrytis cinerea.</title>
        <authorList>
            <person name="van Kan J.A.L."/>
            <person name="Stassen J.H.M."/>
            <person name="Mosbach A."/>
            <person name="van der Lee T.A.J."/>
            <person name="Faino L."/>
            <person name="Farmer A.D."/>
            <person name="Papasotiriou D.G."/>
            <person name="Zhou S."/>
            <person name="Seidl M.F."/>
            <person name="Cottam E."/>
            <person name="Edel D."/>
            <person name="Hahn M."/>
            <person name="Schwartz D.C."/>
            <person name="Dietrich R.A."/>
            <person name="Widdison S."/>
            <person name="Scalliet G."/>
        </authorList>
    </citation>
    <scope>NUCLEOTIDE SEQUENCE [LARGE SCALE GENOMIC DNA]</scope>
    <scope>GENOME REANNOTATION</scope>
    <source>
        <strain>B05.10</strain>
    </source>
</reference>
<organism>
    <name type="scientific">Botryotinia fuckeliana (strain B05.10)</name>
    <name type="common">Noble rot fungus</name>
    <name type="synonym">Botrytis cinerea</name>
    <dbReference type="NCBI Taxonomy" id="332648"/>
    <lineage>
        <taxon>Eukaryota</taxon>
        <taxon>Fungi</taxon>
        <taxon>Dikarya</taxon>
        <taxon>Ascomycota</taxon>
        <taxon>Pezizomycotina</taxon>
        <taxon>Leotiomycetes</taxon>
        <taxon>Helotiales</taxon>
        <taxon>Sclerotiniaceae</taxon>
        <taxon>Botrytis</taxon>
    </lineage>
</organism>
<gene>
    <name type="primary">atg17</name>
    <name type="ORF">BC1G_11270</name>
    <name type="ORF">BCIN_07g06790</name>
</gene>
<dbReference type="EMBL" id="CP009811">
    <property type="protein sequence ID" value="ATZ52185.1"/>
    <property type="molecule type" value="Genomic_DNA"/>
</dbReference>
<dbReference type="RefSeq" id="XP_001549800.1">
    <property type="nucleotide sequence ID" value="XM_001549750.1"/>
</dbReference>
<dbReference type="SMR" id="A6SG03"/>
<dbReference type="EnsemblFungi" id="Bcin07g06790.1">
    <property type="protein sequence ID" value="Bcin07p06790.1"/>
    <property type="gene ID" value="Bcin07g06790"/>
</dbReference>
<dbReference type="GeneID" id="5430276"/>
<dbReference type="KEGG" id="bfu:BCIN_07g06790"/>
<dbReference type="VEuPathDB" id="FungiDB:Bcin07g06790"/>
<dbReference type="OMA" id="THVWRAN"/>
<dbReference type="OrthoDB" id="1937984at2759"/>
<dbReference type="Proteomes" id="UP000001798">
    <property type="component" value="Chromosome bcin07"/>
</dbReference>
<dbReference type="GO" id="GO:1990316">
    <property type="term" value="C:Atg1/ULK1 kinase complex"/>
    <property type="evidence" value="ECO:0007669"/>
    <property type="project" value="TreeGrafter"/>
</dbReference>
<dbReference type="GO" id="GO:0034045">
    <property type="term" value="C:phagophore assembly site membrane"/>
    <property type="evidence" value="ECO:0007669"/>
    <property type="project" value="UniProtKB-SubCell"/>
</dbReference>
<dbReference type="GO" id="GO:0060090">
    <property type="term" value="F:molecular adaptor activity"/>
    <property type="evidence" value="ECO:0007669"/>
    <property type="project" value="TreeGrafter"/>
</dbReference>
<dbReference type="GO" id="GO:0030295">
    <property type="term" value="F:protein kinase activator activity"/>
    <property type="evidence" value="ECO:0007669"/>
    <property type="project" value="TreeGrafter"/>
</dbReference>
<dbReference type="GO" id="GO:0000045">
    <property type="term" value="P:autophagosome assembly"/>
    <property type="evidence" value="ECO:0007669"/>
    <property type="project" value="TreeGrafter"/>
</dbReference>
<dbReference type="GO" id="GO:0000422">
    <property type="term" value="P:autophagy of mitochondrion"/>
    <property type="evidence" value="ECO:0007669"/>
    <property type="project" value="TreeGrafter"/>
</dbReference>
<dbReference type="GO" id="GO:0034727">
    <property type="term" value="P:piecemeal microautophagy of the nucleus"/>
    <property type="evidence" value="ECO:0007669"/>
    <property type="project" value="TreeGrafter"/>
</dbReference>
<dbReference type="InterPro" id="IPR007240">
    <property type="entry name" value="Atg17"/>
</dbReference>
<dbReference type="InterPro" id="IPR045326">
    <property type="entry name" value="ATG17-like_dom"/>
</dbReference>
<dbReference type="PANTHER" id="PTHR28005">
    <property type="entry name" value="AUTOPHAGY-RELATED PROTEIN 17"/>
    <property type="match status" value="1"/>
</dbReference>
<dbReference type="PANTHER" id="PTHR28005:SF1">
    <property type="entry name" value="AUTOPHAGY-RELATED PROTEIN 17"/>
    <property type="match status" value="1"/>
</dbReference>
<dbReference type="Pfam" id="PF04108">
    <property type="entry name" value="ATG17_like"/>
    <property type="match status" value="1"/>
</dbReference>